<proteinExistence type="inferred from homology"/>
<reference key="1">
    <citation type="journal article" date="2009" name="PLoS Genet.">
        <title>Adaptations to submarine hydrothermal environments exemplified by the genome of Nautilia profundicola.</title>
        <authorList>
            <person name="Campbell B.J."/>
            <person name="Smith J.L."/>
            <person name="Hanson T.E."/>
            <person name="Klotz M.G."/>
            <person name="Stein L.Y."/>
            <person name="Lee C.K."/>
            <person name="Wu D."/>
            <person name="Robinson J.M."/>
            <person name="Khouri H.M."/>
            <person name="Eisen J.A."/>
            <person name="Cary S.C."/>
        </authorList>
    </citation>
    <scope>NUCLEOTIDE SEQUENCE [LARGE SCALE GENOMIC DNA]</scope>
    <source>
        <strain>ATCC BAA-1463 / DSM 18972 / AmH</strain>
    </source>
</reference>
<keyword id="KW-0312">Gluconeogenesis</keyword>
<keyword id="KW-0324">Glycolysis</keyword>
<keyword id="KW-0413">Isomerase</keyword>
<comment type="function">
    <text evidence="1">Catalyzes the interconversion of 2-phosphoglycerate and 3-phosphoglycerate.</text>
</comment>
<comment type="catalytic activity">
    <reaction evidence="1">
        <text>(2R)-2-phosphoglycerate = (2R)-3-phosphoglycerate</text>
        <dbReference type="Rhea" id="RHEA:15901"/>
        <dbReference type="ChEBI" id="CHEBI:58272"/>
        <dbReference type="ChEBI" id="CHEBI:58289"/>
        <dbReference type="EC" id="5.4.2.11"/>
    </reaction>
</comment>
<comment type="pathway">
    <text evidence="1">Carbohydrate degradation; glycolysis; pyruvate from D-glyceraldehyde 3-phosphate: step 3/5.</text>
</comment>
<comment type="subunit">
    <text evidence="1">Homodimer.</text>
</comment>
<comment type="similarity">
    <text evidence="1">Belongs to the phosphoglycerate mutase family. BPG-dependent PGAM subfamily.</text>
</comment>
<dbReference type="EC" id="5.4.2.11" evidence="1"/>
<dbReference type="EMBL" id="CP001279">
    <property type="protein sequence ID" value="ACM93064.1"/>
    <property type="molecule type" value="Genomic_DNA"/>
</dbReference>
<dbReference type="RefSeq" id="WP_015902116.1">
    <property type="nucleotide sequence ID" value="NC_012115.1"/>
</dbReference>
<dbReference type="SMR" id="B9L9H5"/>
<dbReference type="STRING" id="598659.NAMH_0880"/>
<dbReference type="KEGG" id="nam:NAMH_0880"/>
<dbReference type="eggNOG" id="COG0588">
    <property type="taxonomic scope" value="Bacteria"/>
</dbReference>
<dbReference type="HOGENOM" id="CLU_033323_1_1_7"/>
<dbReference type="OrthoDB" id="9781415at2"/>
<dbReference type="UniPathway" id="UPA00109">
    <property type="reaction ID" value="UER00186"/>
</dbReference>
<dbReference type="Proteomes" id="UP000000448">
    <property type="component" value="Chromosome"/>
</dbReference>
<dbReference type="GO" id="GO:0004619">
    <property type="term" value="F:phosphoglycerate mutase activity"/>
    <property type="evidence" value="ECO:0007669"/>
    <property type="project" value="UniProtKB-EC"/>
</dbReference>
<dbReference type="GO" id="GO:0006094">
    <property type="term" value="P:gluconeogenesis"/>
    <property type="evidence" value="ECO:0007669"/>
    <property type="project" value="UniProtKB-UniRule"/>
</dbReference>
<dbReference type="GO" id="GO:0006096">
    <property type="term" value="P:glycolytic process"/>
    <property type="evidence" value="ECO:0007669"/>
    <property type="project" value="UniProtKB-UniRule"/>
</dbReference>
<dbReference type="CDD" id="cd07067">
    <property type="entry name" value="HP_PGM_like"/>
    <property type="match status" value="1"/>
</dbReference>
<dbReference type="FunFam" id="3.40.50.1240:FF:000003">
    <property type="entry name" value="2,3-bisphosphoglycerate-dependent phosphoglycerate mutase"/>
    <property type="match status" value="1"/>
</dbReference>
<dbReference type="Gene3D" id="3.40.50.1240">
    <property type="entry name" value="Phosphoglycerate mutase-like"/>
    <property type="match status" value="1"/>
</dbReference>
<dbReference type="HAMAP" id="MF_01039">
    <property type="entry name" value="PGAM_GpmA"/>
    <property type="match status" value="1"/>
</dbReference>
<dbReference type="InterPro" id="IPR013078">
    <property type="entry name" value="His_Pase_superF_clade-1"/>
</dbReference>
<dbReference type="InterPro" id="IPR029033">
    <property type="entry name" value="His_PPase_superfam"/>
</dbReference>
<dbReference type="InterPro" id="IPR005952">
    <property type="entry name" value="Phosphogly_mut1"/>
</dbReference>
<dbReference type="NCBIfam" id="TIGR01258">
    <property type="entry name" value="pgm_1"/>
    <property type="match status" value="1"/>
</dbReference>
<dbReference type="NCBIfam" id="NF010713">
    <property type="entry name" value="PRK14115.1"/>
    <property type="match status" value="1"/>
</dbReference>
<dbReference type="PANTHER" id="PTHR11931">
    <property type="entry name" value="PHOSPHOGLYCERATE MUTASE"/>
    <property type="match status" value="1"/>
</dbReference>
<dbReference type="Pfam" id="PF00300">
    <property type="entry name" value="His_Phos_1"/>
    <property type="match status" value="2"/>
</dbReference>
<dbReference type="SMART" id="SM00855">
    <property type="entry name" value="PGAM"/>
    <property type="match status" value="1"/>
</dbReference>
<dbReference type="SUPFAM" id="SSF53254">
    <property type="entry name" value="Phosphoglycerate mutase-like"/>
    <property type="match status" value="1"/>
</dbReference>
<sequence>MAKLVLVRHGKSEWNKQNRFTGWVDVDLAPEGIEEAKKAGQKLKEAGFCFDICFSSYLKRAIKTGIIILEELDLLFIDHLKDWRFNERHYGALTGLNKDEVKAEVGEEKFLLYRRSYDVPPPPLSEDDKRHPRFDPHYKNFPVELLPNTESLKDNQIRAMAAFHERVAPLLVEGKDVLITAHGNTIRGMVKELDGISDEDIPKFEIATGIPRVYEFDEALHIKNVYNID</sequence>
<evidence type="ECO:0000255" key="1">
    <source>
        <dbReference type="HAMAP-Rule" id="MF_01039"/>
    </source>
</evidence>
<accession>B9L9H5</accession>
<organism>
    <name type="scientific">Nautilia profundicola (strain ATCC BAA-1463 / DSM 18972 / AmH)</name>
    <dbReference type="NCBI Taxonomy" id="598659"/>
    <lineage>
        <taxon>Bacteria</taxon>
        <taxon>Pseudomonadati</taxon>
        <taxon>Campylobacterota</taxon>
        <taxon>Epsilonproteobacteria</taxon>
        <taxon>Nautiliales</taxon>
        <taxon>Nautiliaceae</taxon>
        <taxon>Nautilia</taxon>
    </lineage>
</organism>
<gene>
    <name evidence="1" type="primary">gpmA</name>
    <name type="ordered locus">NAMH_0880</name>
</gene>
<feature type="chain" id="PRO_1000149525" description="2,3-bisphosphoglycerate-dependent phosphoglycerate mutase">
    <location>
        <begin position="1"/>
        <end position="229"/>
    </location>
</feature>
<feature type="active site" description="Tele-phosphohistidine intermediate" evidence="1">
    <location>
        <position position="9"/>
    </location>
</feature>
<feature type="active site" description="Proton donor/acceptor" evidence="1">
    <location>
        <position position="87"/>
    </location>
</feature>
<feature type="binding site" evidence="1">
    <location>
        <begin position="8"/>
        <end position="15"/>
    </location>
    <ligand>
        <name>substrate</name>
    </ligand>
</feature>
<feature type="binding site" evidence="1">
    <location>
        <begin position="21"/>
        <end position="22"/>
    </location>
    <ligand>
        <name>substrate</name>
    </ligand>
</feature>
<feature type="binding site" evidence="1">
    <location>
        <position position="60"/>
    </location>
    <ligand>
        <name>substrate</name>
    </ligand>
</feature>
<feature type="binding site" evidence="1">
    <location>
        <begin position="87"/>
        <end position="90"/>
    </location>
    <ligand>
        <name>substrate</name>
    </ligand>
</feature>
<feature type="binding site" evidence="1">
    <location>
        <position position="98"/>
    </location>
    <ligand>
        <name>substrate</name>
    </ligand>
</feature>
<feature type="binding site" evidence="1">
    <location>
        <begin position="114"/>
        <end position="115"/>
    </location>
    <ligand>
        <name>substrate</name>
    </ligand>
</feature>
<feature type="binding site" evidence="1">
    <location>
        <begin position="183"/>
        <end position="184"/>
    </location>
    <ligand>
        <name>substrate</name>
    </ligand>
</feature>
<feature type="site" description="Transition state stabilizer" evidence="1">
    <location>
        <position position="182"/>
    </location>
</feature>
<protein>
    <recommendedName>
        <fullName evidence="1">2,3-bisphosphoglycerate-dependent phosphoglycerate mutase</fullName>
        <shortName evidence="1">BPG-dependent PGAM</shortName>
        <shortName evidence="1">PGAM</shortName>
        <shortName evidence="1">Phosphoglyceromutase</shortName>
        <shortName evidence="1">dPGM</shortName>
        <ecNumber evidence="1">5.4.2.11</ecNumber>
    </recommendedName>
</protein>
<name>GPMA_NAUPA</name>